<accession>A8YUV4</accession>
<sequence length="428" mass="46754">MLKSVIENVHALEIFDSRGNPTVEVHVTLSNGVVGKAEVPSGASTGENEAVELRDGGSRLGGKGVSKAVNNVNTEINDALKGMDPYDQAKIDQTMIDLDGTPNKGRLGANAILGVSMATAVAAANDNHQPLYRYLGGIDLEMPQTFHNVINGGEHADNGIDIQEFMITPIAKTSFRDGFEKIVNVYHTLKKVLEDMGYETGLGDEGGFAPNMKNSEEALKALHESIIKAGYKPGEDIGIACDCAASYFYNKEDGKYHLEGKVLNDEELADYYDKLLDEFPELMSMEDPYDENDVDGMVKFTKSHKDRIQIVLDDFICTNPALLKKAIKEGAGNASLIKLNQIGTVTETLETIRMSRKNGYNTMISHRSGETGDTFIADLAVAINGGQLKTGAPARSERVEKYNRLLEIEEELGKGERLAFFPDDIDHD</sequence>
<evidence type="ECO:0000255" key="1">
    <source>
        <dbReference type="HAMAP-Rule" id="MF_00318"/>
    </source>
</evidence>
<feature type="chain" id="PRO_1000072008" description="Enolase">
    <location>
        <begin position="1"/>
        <end position="428"/>
    </location>
</feature>
<feature type="active site" description="Proton donor" evidence="1">
    <location>
        <position position="205"/>
    </location>
</feature>
<feature type="active site" description="Proton acceptor" evidence="1">
    <location>
        <position position="338"/>
    </location>
</feature>
<feature type="binding site" evidence="1">
    <location>
        <position position="163"/>
    </location>
    <ligand>
        <name>(2R)-2-phosphoglycerate</name>
        <dbReference type="ChEBI" id="CHEBI:58289"/>
    </ligand>
</feature>
<feature type="binding site" evidence="1">
    <location>
        <position position="242"/>
    </location>
    <ligand>
        <name>Mg(2+)</name>
        <dbReference type="ChEBI" id="CHEBI:18420"/>
    </ligand>
</feature>
<feature type="binding site" evidence="1">
    <location>
        <position position="286"/>
    </location>
    <ligand>
        <name>Mg(2+)</name>
        <dbReference type="ChEBI" id="CHEBI:18420"/>
    </ligand>
</feature>
<feature type="binding site" evidence="1">
    <location>
        <position position="313"/>
    </location>
    <ligand>
        <name>Mg(2+)</name>
        <dbReference type="ChEBI" id="CHEBI:18420"/>
    </ligand>
</feature>
<feature type="binding site" evidence="1">
    <location>
        <position position="338"/>
    </location>
    <ligand>
        <name>(2R)-2-phosphoglycerate</name>
        <dbReference type="ChEBI" id="CHEBI:58289"/>
    </ligand>
</feature>
<feature type="binding site" evidence="1">
    <location>
        <position position="367"/>
    </location>
    <ligand>
        <name>(2R)-2-phosphoglycerate</name>
        <dbReference type="ChEBI" id="CHEBI:58289"/>
    </ligand>
</feature>
<feature type="binding site" evidence="1">
    <location>
        <position position="368"/>
    </location>
    <ligand>
        <name>(2R)-2-phosphoglycerate</name>
        <dbReference type="ChEBI" id="CHEBI:58289"/>
    </ligand>
</feature>
<feature type="binding site" evidence="1">
    <location>
        <position position="389"/>
    </location>
    <ligand>
        <name>(2R)-2-phosphoglycerate</name>
        <dbReference type="ChEBI" id="CHEBI:58289"/>
    </ligand>
</feature>
<name>ENO_LACH4</name>
<reference key="1">
    <citation type="journal article" date="2008" name="J. Bacteriol.">
        <title>Genome sequence of Lactobacillus helveticus: an organism distinguished by selective gene loss and IS element expansion.</title>
        <authorList>
            <person name="Callanan M."/>
            <person name="Kaleta P."/>
            <person name="O'Callaghan J."/>
            <person name="O'Sullivan O."/>
            <person name="Jordan K."/>
            <person name="McAuliffe O."/>
            <person name="Sangrador-Vegas A."/>
            <person name="Slattery L."/>
            <person name="Fitzgerald G.F."/>
            <person name="Beresford T."/>
            <person name="Ross R.P."/>
        </authorList>
    </citation>
    <scope>NUCLEOTIDE SEQUENCE [LARGE SCALE GENOMIC DNA]</scope>
    <source>
        <strain>DPC 4571</strain>
    </source>
</reference>
<proteinExistence type="inferred from homology"/>
<protein>
    <recommendedName>
        <fullName evidence="1">Enolase</fullName>
        <ecNumber evidence="1">4.2.1.11</ecNumber>
    </recommendedName>
    <alternativeName>
        <fullName evidence="1">2-phospho-D-glycerate hydro-lyase</fullName>
    </alternativeName>
    <alternativeName>
        <fullName evidence="1">2-phosphoglycerate dehydratase</fullName>
    </alternativeName>
</protein>
<dbReference type="EC" id="4.2.1.11" evidence="1"/>
<dbReference type="EMBL" id="CP000517">
    <property type="protein sequence ID" value="ABX27042.1"/>
    <property type="molecule type" value="Genomic_DNA"/>
</dbReference>
<dbReference type="RefSeq" id="WP_012211750.1">
    <property type="nucleotide sequence ID" value="NC_010080.1"/>
</dbReference>
<dbReference type="SMR" id="A8YUV4"/>
<dbReference type="KEGG" id="lhe:lhv_0945"/>
<dbReference type="eggNOG" id="COG0148">
    <property type="taxonomic scope" value="Bacteria"/>
</dbReference>
<dbReference type="HOGENOM" id="CLU_031223_2_1_9"/>
<dbReference type="UniPathway" id="UPA00109">
    <property type="reaction ID" value="UER00187"/>
</dbReference>
<dbReference type="Proteomes" id="UP000000790">
    <property type="component" value="Chromosome"/>
</dbReference>
<dbReference type="GO" id="GO:0009986">
    <property type="term" value="C:cell surface"/>
    <property type="evidence" value="ECO:0007669"/>
    <property type="project" value="UniProtKB-SubCell"/>
</dbReference>
<dbReference type="GO" id="GO:0005576">
    <property type="term" value="C:extracellular region"/>
    <property type="evidence" value="ECO:0007669"/>
    <property type="project" value="UniProtKB-SubCell"/>
</dbReference>
<dbReference type="GO" id="GO:0000015">
    <property type="term" value="C:phosphopyruvate hydratase complex"/>
    <property type="evidence" value="ECO:0007669"/>
    <property type="project" value="InterPro"/>
</dbReference>
<dbReference type="GO" id="GO:0000287">
    <property type="term" value="F:magnesium ion binding"/>
    <property type="evidence" value="ECO:0007669"/>
    <property type="project" value="UniProtKB-UniRule"/>
</dbReference>
<dbReference type="GO" id="GO:0004634">
    <property type="term" value="F:phosphopyruvate hydratase activity"/>
    <property type="evidence" value="ECO:0007669"/>
    <property type="project" value="UniProtKB-UniRule"/>
</dbReference>
<dbReference type="GO" id="GO:0006096">
    <property type="term" value="P:glycolytic process"/>
    <property type="evidence" value="ECO:0007669"/>
    <property type="project" value="UniProtKB-UniRule"/>
</dbReference>
<dbReference type="CDD" id="cd03313">
    <property type="entry name" value="enolase"/>
    <property type="match status" value="1"/>
</dbReference>
<dbReference type="FunFam" id="3.20.20.120:FF:000014">
    <property type="entry name" value="Enolase"/>
    <property type="match status" value="1"/>
</dbReference>
<dbReference type="FunFam" id="3.30.390.10:FF:000001">
    <property type="entry name" value="Enolase"/>
    <property type="match status" value="1"/>
</dbReference>
<dbReference type="Gene3D" id="3.20.20.120">
    <property type="entry name" value="Enolase-like C-terminal domain"/>
    <property type="match status" value="1"/>
</dbReference>
<dbReference type="Gene3D" id="3.30.390.10">
    <property type="entry name" value="Enolase-like, N-terminal domain"/>
    <property type="match status" value="1"/>
</dbReference>
<dbReference type="HAMAP" id="MF_00318">
    <property type="entry name" value="Enolase"/>
    <property type="match status" value="1"/>
</dbReference>
<dbReference type="InterPro" id="IPR000941">
    <property type="entry name" value="Enolase"/>
</dbReference>
<dbReference type="InterPro" id="IPR036849">
    <property type="entry name" value="Enolase-like_C_sf"/>
</dbReference>
<dbReference type="InterPro" id="IPR029017">
    <property type="entry name" value="Enolase-like_N"/>
</dbReference>
<dbReference type="InterPro" id="IPR020810">
    <property type="entry name" value="Enolase_C"/>
</dbReference>
<dbReference type="InterPro" id="IPR020809">
    <property type="entry name" value="Enolase_CS"/>
</dbReference>
<dbReference type="InterPro" id="IPR020811">
    <property type="entry name" value="Enolase_N"/>
</dbReference>
<dbReference type="NCBIfam" id="TIGR01060">
    <property type="entry name" value="eno"/>
    <property type="match status" value="1"/>
</dbReference>
<dbReference type="PANTHER" id="PTHR11902">
    <property type="entry name" value="ENOLASE"/>
    <property type="match status" value="1"/>
</dbReference>
<dbReference type="PANTHER" id="PTHR11902:SF1">
    <property type="entry name" value="ENOLASE"/>
    <property type="match status" value="1"/>
</dbReference>
<dbReference type="Pfam" id="PF00113">
    <property type="entry name" value="Enolase_C"/>
    <property type="match status" value="1"/>
</dbReference>
<dbReference type="Pfam" id="PF03952">
    <property type="entry name" value="Enolase_N"/>
    <property type="match status" value="1"/>
</dbReference>
<dbReference type="PIRSF" id="PIRSF001400">
    <property type="entry name" value="Enolase"/>
    <property type="match status" value="1"/>
</dbReference>
<dbReference type="PRINTS" id="PR00148">
    <property type="entry name" value="ENOLASE"/>
</dbReference>
<dbReference type="SFLD" id="SFLDF00002">
    <property type="entry name" value="enolase"/>
    <property type="match status" value="1"/>
</dbReference>
<dbReference type="SFLD" id="SFLDG00178">
    <property type="entry name" value="enolase"/>
    <property type="match status" value="1"/>
</dbReference>
<dbReference type="SMART" id="SM01192">
    <property type="entry name" value="Enolase_C"/>
    <property type="match status" value="1"/>
</dbReference>
<dbReference type="SMART" id="SM01193">
    <property type="entry name" value="Enolase_N"/>
    <property type="match status" value="1"/>
</dbReference>
<dbReference type="SUPFAM" id="SSF51604">
    <property type="entry name" value="Enolase C-terminal domain-like"/>
    <property type="match status" value="1"/>
</dbReference>
<dbReference type="SUPFAM" id="SSF54826">
    <property type="entry name" value="Enolase N-terminal domain-like"/>
    <property type="match status" value="1"/>
</dbReference>
<dbReference type="PROSITE" id="PS00164">
    <property type="entry name" value="ENOLASE"/>
    <property type="match status" value="1"/>
</dbReference>
<organism>
    <name type="scientific">Lactobacillus helveticus (strain DPC 4571)</name>
    <dbReference type="NCBI Taxonomy" id="405566"/>
    <lineage>
        <taxon>Bacteria</taxon>
        <taxon>Bacillati</taxon>
        <taxon>Bacillota</taxon>
        <taxon>Bacilli</taxon>
        <taxon>Lactobacillales</taxon>
        <taxon>Lactobacillaceae</taxon>
        <taxon>Lactobacillus</taxon>
    </lineage>
</organism>
<comment type="function">
    <text evidence="1">Catalyzes the reversible conversion of 2-phosphoglycerate (2-PG) into phosphoenolpyruvate (PEP). It is essential for the degradation of carbohydrates via glycolysis.</text>
</comment>
<comment type="catalytic activity">
    <reaction evidence="1">
        <text>(2R)-2-phosphoglycerate = phosphoenolpyruvate + H2O</text>
        <dbReference type="Rhea" id="RHEA:10164"/>
        <dbReference type="ChEBI" id="CHEBI:15377"/>
        <dbReference type="ChEBI" id="CHEBI:58289"/>
        <dbReference type="ChEBI" id="CHEBI:58702"/>
        <dbReference type="EC" id="4.2.1.11"/>
    </reaction>
</comment>
<comment type="cofactor">
    <cofactor evidence="1">
        <name>Mg(2+)</name>
        <dbReference type="ChEBI" id="CHEBI:18420"/>
    </cofactor>
    <text evidence="1">Binds a second Mg(2+) ion via substrate during catalysis.</text>
</comment>
<comment type="pathway">
    <text evidence="1">Carbohydrate degradation; glycolysis; pyruvate from D-glyceraldehyde 3-phosphate: step 4/5.</text>
</comment>
<comment type="subcellular location">
    <subcellularLocation>
        <location evidence="1">Cytoplasm</location>
    </subcellularLocation>
    <subcellularLocation>
        <location evidence="1">Secreted</location>
    </subcellularLocation>
    <subcellularLocation>
        <location evidence="1">Cell surface</location>
    </subcellularLocation>
    <text evidence="1">Fractions of enolase are present in both the cytoplasm and on the cell surface.</text>
</comment>
<comment type="similarity">
    <text evidence="1">Belongs to the enolase family.</text>
</comment>
<gene>
    <name evidence="1" type="primary">eno</name>
    <name type="ordered locus">lhv_0945</name>
</gene>
<keyword id="KW-0963">Cytoplasm</keyword>
<keyword id="KW-0324">Glycolysis</keyword>
<keyword id="KW-0456">Lyase</keyword>
<keyword id="KW-0460">Magnesium</keyword>
<keyword id="KW-0479">Metal-binding</keyword>
<keyword id="KW-0964">Secreted</keyword>